<organism>
    <name type="scientific">Leptothrix cholodnii (strain ATCC 51168 / LMG 8142 / SP-6)</name>
    <name type="common">Leptothrix discophora (strain SP-6)</name>
    <dbReference type="NCBI Taxonomy" id="395495"/>
    <lineage>
        <taxon>Bacteria</taxon>
        <taxon>Pseudomonadati</taxon>
        <taxon>Pseudomonadota</taxon>
        <taxon>Betaproteobacteria</taxon>
        <taxon>Burkholderiales</taxon>
        <taxon>Sphaerotilaceae</taxon>
        <taxon>Leptothrix</taxon>
    </lineage>
</organism>
<proteinExistence type="inferred from homology"/>
<reference key="1">
    <citation type="submission" date="2008-03" db="EMBL/GenBank/DDBJ databases">
        <title>Complete sequence of Leptothrix cholodnii SP-6.</title>
        <authorList>
            <consortium name="US DOE Joint Genome Institute"/>
            <person name="Copeland A."/>
            <person name="Lucas S."/>
            <person name="Lapidus A."/>
            <person name="Glavina del Rio T."/>
            <person name="Dalin E."/>
            <person name="Tice H."/>
            <person name="Bruce D."/>
            <person name="Goodwin L."/>
            <person name="Pitluck S."/>
            <person name="Chertkov O."/>
            <person name="Brettin T."/>
            <person name="Detter J.C."/>
            <person name="Han C."/>
            <person name="Kuske C.R."/>
            <person name="Schmutz J."/>
            <person name="Larimer F."/>
            <person name="Land M."/>
            <person name="Hauser L."/>
            <person name="Kyrpides N."/>
            <person name="Lykidis A."/>
            <person name="Emerson D."/>
            <person name="Richardson P."/>
        </authorList>
    </citation>
    <scope>NUCLEOTIDE SEQUENCE [LARGE SCALE GENOMIC DNA]</scope>
    <source>
        <strain>ATCC 51168 / LMG 8142 / SP-6</strain>
    </source>
</reference>
<feature type="chain" id="PRO_0000356526" description="Large ribosomal subunit protein bL33">
    <location>
        <begin position="1"/>
        <end position="56"/>
    </location>
</feature>
<feature type="region of interest" description="Disordered" evidence="2">
    <location>
        <begin position="1"/>
        <end position="27"/>
    </location>
</feature>
<feature type="compositionally biased region" description="Basic and acidic residues" evidence="2">
    <location>
        <begin position="1"/>
        <end position="12"/>
    </location>
</feature>
<name>RL33_LEPCP</name>
<sequence>MASKGGREKIKLESTAGTGHFYTTNKNKKTTPEKLEFMKFDPKVRKHVLYKEVKLR</sequence>
<keyword id="KW-1185">Reference proteome</keyword>
<keyword id="KW-0687">Ribonucleoprotein</keyword>
<keyword id="KW-0689">Ribosomal protein</keyword>
<evidence type="ECO:0000255" key="1">
    <source>
        <dbReference type="HAMAP-Rule" id="MF_00294"/>
    </source>
</evidence>
<evidence type="ECO:0000256" key="2">
    <source>
        <dbReference type="SAM" id="MobiDB-lite"/>
    </source>
</evidence>
<evidence type="ECO:0000305" key="3"/>
<protein>
    <recommendedName>
        <fullName evidence="1">Large ribosomal subunit protein bL33</fullName>
    </recommendedName>
    <alternativeName>
        <fullName evidence="3">50S ribosomal protein L33</fullName>
    </alternativeName>
</protein>
<comment type="similarity">
    <text evidence="1">Belongs to the bacterial ribosomal protein bL33 family.</text>
</comment>
<accession>B1Y148</accession>
<dbReference type="EMBL" id="CP001013">
    <property type="protein sequence ID" value="ACB33025.1"/>
    <property type="molecule type" value="Genomic_DNA"/>
</dbReference>
<dbReference type="RefSeq" id="WP_012345787.1">
    <property type="nucleotide sequence ID" value="NC_010524.1"/>
</dbReference>
<dbReference type="SMR" id="B1Y148"/>
<dbReference type="STRING" id="395495.Lcho_0752"/>
<dbReference type="KEGG" id="lch:Lcho_0752"/>
<dbReference type="eggNOG" id="COG0267">
    <property type="taxonomic scope" value="Bacteria"/>
</dbReference>
<dbReference type="HOGENOM" id="CLU_190949_1_1_4"/>
<dbReference type="Proteomes" id="UP000001693">
    <property type="component" value="Chromosome"/>
</dbReference>
<dbReference type="GO" id="GO:0022625">
    <property type="term" value="C:cytosolic large ribosomal subunit"/>
    <property type="evidence" value="ECO:0007669"/>
    <property type="project" value="TreeGrafter"/>
</dbReference>
<dbReference type="GO" id="GO:0003735">
    <property type="term" value="F:structural constituent of ribosome"/>
    <property type="evidence" value="ECO:0007669"/>
    <property type="project" value="InterPro"/>
</dbReference>
<dbReference type="GO" id="GO:0006412">
    <property type="term" value="P:translation"/>
    <property type="evidence" value="ECO:0007669"/>
    <property type="project" value="UniProtKB-UniRule"/>
</dbReference>
<dbReference type="Gene3D" id="2.20.28.120">
    <property type="entry name" value="Ribosomal protein L33"/>
    <property type="match status" value="1"/>
</dbReference>
<dbReference type="HAMAP" id="MF_00294">
    <property type="entry name" value="Ribosomal_bL33"/>
    <property type="match status" value="1"/>
</dbReference>
<dbReference type="InterPro" id="IPR001705">
    <property type="entry name" value="Ribosomal_bL33"/>
</dbReference>
<dbReference type="InterPro" id="IPR018264">
    <property type="entry name" value="Ribosomal_bL33_CS"/>
</dbReference>
<dbReference type="InterPro" id="IPR038584">
    <property type="entry name" value="Ribosomal_bL33_sf"/>
</dbReference>
<dbReference type="InterPro" id="IPR011332">
    <property type="entry name" value="Ribosomal_zn-bd"/>
</dbReference>
<dbReference type="NCBIfam" id="NF001860">
    <property type="entry name" value="PRK00595.1"/>
    <property type="match status" value="1"/>
</dbReference>
<dbReference type="NCBIfam" id="TIGR01023">
    <property type="entry name" value="rpmG_bact"/>
    <property type="match status" value="1"/>
</dbReference>
<dbReference type="PANTHER" id="PTHR15238">
    <property type="entry name" value="54S RIBOSOMAL PROTEIN L39, MITOCHONDRIAL"/>
    <property type="match status" value="1"/>
</dbReference>
<dbReference type="PANTHER" id="PTHR15238:SF1">
    <property type="entry name" value="LARGE RIBOSOMAL SUBUNIT PROTEIN BL33M"/>
    <property type="match status" value="1"/>
</dbReference>
<dbReference type="Pfam" id="PF00471">
    <property type="entry name" value="Ribosomal_L33"/>
    <property type="match status" value="1"/>
</dbReference>
<dbReference type="SUPFAM" id="SSF57829">
    <property type="entry name" value="Zn-binding ribosomal proteins"/>
    <property type="match status" value="1"/>
</dbReference>
<dbReference type="PROSITE" id="PS00582">
    <property type="entry name" value="RIBOSOMAL_L33"/>
    <property type="match status" value="1"/>
</dbReference>
<gene>
    <name evidence="1" type="primary">rpmG</name>
    <name type="ordered locus">Lcho_0752</name>
</gene>